<feature type="chain" id="PRO_0000146470" description="Small ribosomal subunit protein uS12">
    <location>
        <begin position="1"/>
        <end position="143"/>
    </location>
</feature>
<feature type="modified residue" description="Hydroxyproline" evidence="1">
    <location>
        <position position="62"/>
    </location>
</feature>
<organism>
    <name type="scientific">Caenorhabditis elegans</name>
    <dbReference type="NCBI Taxonomy" id="6239"/>
    <lineage>
        <taxon>Eukaryota</taxon>
        <taxon>Metazoa</taxon>
        <taxon>Ecdysozoa</taxon>
        <taxon>Nematoda</taxon>
        <taxon>Chromadorea</taxon>
        <taxon>Rhabditida</taxon>
        <taxon>Rhabditina</taxon>
        <taxon>Rhabditomorpha</taxon>
        <taxon>Rhabditoidea</taxon>
        <taxon>Rhabditidae</taxon>
        <taxon>Peloderinae</taxon>
        <taxon>Caenorhabditis</taxon>
    </lineage>
</organism>
<name>RS23_CAEEL</name>
<reference key="1">
    <citation type="journal article" date="1998" name="Science">
        <title>Genome sequence of the nematode C. elegans: a platform for investigating biology.</title>
        <authorList>
            <consortium name="The C. elegans sequencing consortium"/>
        </authorList>
    </citation>
    <scope>NUCLEOTIDE SEQUENCE [LARGE SCALE GENOMIC DNA]</scope>
    <source>
        <strain>Bristol N2</strain>
    </source>
</reference>
<gene>
    <name type="primary">rps-23</name>
    <name type="ORF">F28D1.7</name>
</gene>
<sequence>MGKPKGLCTARKLKTHRQEQRWNDKRYKKAHIGTRWKSNPFGGASHAKGIVLEKIGVEAKQPNSAIRKCVRVQLIKNGKKITAFVPNDGCLNFVEENDEVLVSGFGRSGHAVGDIPGVRFKIVKVANTSLIALFKGKKERPRS</sequence>
<evidence type="ECO:0000250" key="1"/>
<evidence type="ECO:0000250" key="2">
    <source>
        <dbReference type="UniProtKB" id="P62266"/>
    </source>
</evidence>
<evidence type="ECO:0000250" key="3">
    <source>
        <dbReference type="UniProtKB" id="Q6SA96"/>
    </source>
</evidence>
<evidence type="ECO:0000305" key="4"/>
<keyword id="KW-0002">3D-structure</keyword>
<keyword id="KW-0963">Cytoplasm</keyword>
<keyword id="KW-0256">Endoplasmic reticulum</keyword>
<keyword id="KW-0379">Hydroxylation</keyword>
<keyword id="KW-1185">Reference proteome</keyword>
<keyword id="KW-0687">Ribonucleoprotein</keyword>
<keyword id="KW-0689">Ribosomal protein</keyword>
<protein>
    <recommendedName>
        <fullName evidence="4">Small ribosomal subunit protein uS12</fullName>
    </recommendedName>
    <alternativeName>
        <fullName>40S ribosomal protein S23</fullName>
    </alternativeName>
</protein>
<comment type="subunit">
    <text evidence="3">Component of the 40S small ribosomal subunit.</text>
</comment>
<comment type="subcellular location">
    <subcellularLocation>
        <location evidence="2">Cytoplasm</location>
        <location evidence="2">Cytosol</location>
    </subcellularLocation>
    <subcellularLocation>
        <location evidence="2">Cytoplasm</location>
    </subcellularLocation>
    <subcellularLocation>
        <location evidence="3">Rough endoplasmic reticulum</location>
    </subcellularLocation>
    <text evidence="2 3">Detected on cytosolic polysomes (By similarity). Detected in ribosomes that are associated with the rough endoplasmic reticulum (By similarity).</text>
</comment>
<comment type="similarity">
    <text evidence="4">Belongs to the universal ribosomal protein uS12 family.</text>
</comment>
<proteinExistence type="evidence at protein level"/>
<accession>Q19877</accession>
<dbReference type="EMBL" id="Z70684">
    <property type="protein sequence ID" value="CAA94601.1"/>
    <property type="molecule type" value="Genomic_DNA"/>
</dbReference>
<dbReference type="PIR" id="T21497">
    <property type="entry name" value="T21497"/>
</dbReference>
<dbReference type="RefSeq" id="NP_502365.1">
    <property type="nucleotide sequence ID" value="NM_069964.9"/>
</dbReference>
<dbReference type="PDB" id="9BH5">
    <property type="method" value="EM"/>
    <property type="resolution" value="2.63 A"/>
    <property type="chains" value="AX=1-143"/>
</dbReference>
<dbReference type="PDB" id="9CAI">
    <property type="method" value="EM"/>
    <property type="resolution" value="2.59 A"/>
    <property type="chains" value="AX=1-143"/>
</dbReference>
<dbReference type="PDBsum" id="9BH5"/>
<dbReference type="PDBsum" id="9CAI"/>
<dbReference type="EMDB" id="EMD-44533"/>
<dbReference type="EMDB" id="EMD-45392"/>
<dbReference type="SMR" id="Q19877"/>
<dbReference type="BioGRID" id="43281">
    <property type="interactions" value="95"/>
</dbReference>
<dbReference type="DIP" id="DIP-27207N"/>
<dbReference type="FunCoup" id="Q19877">
    <property type="interactions" value="1908"/>
</dbReference>
<dbReference type="STRING" id="6239.F28D1.7a.2"/>
<dbReference type="PaxDb" id="6239-F28D1.7.1"/>
<dbReference type="PeptideAtlas" id="Q19877"/>
<dbReference type="EnsemblMetazoa" id="F28D1.7a.1">
    <property type="protein sequence ID" value="F28D1.7a.1"/>
    <property type="gene ID" value="WBGene00004492"/>
</dbReference>
<dbReference type="GeneID" id="178188"/>
<dbReference type="KEGG" id="cel:CELE_F28D1.7"/>
<dbReference type="UCSC" id="F28D1.7.1">
    <property type="organism name" value="c. elegans"/>
</dbReference>
<dbReference type="AGR" id="WB:WBGene00004492"/>
<dbReference type="CTD" id="178188"/>
<dbReference type="WormBase" id="F28D1.7a">
    <property type="protein sequence ID" value="CE05747"/>
    <property type="gene ID" value="WBGene00004492"/>
    <property type="gene designation" value="rps-23"/>
</dbReference>
<dbReference type="eggNOG" id="KOG1749">
    <property type="taxonomic scope" value="Eukaryota"/>
</dbReference>
<dbReference type="GeneTree" id="ENSGT00550000074784"/>
<dbReference type="HOGENOM" id="CLU_115574_0_1_1"/>
<dbReference type="InParanoid" id="Q19877"/>
<dbReference type="OMA" id="KFRWSQR"/>
<dbReference type="OrthoDB" id="1713912at2759"/>
<dbReference type="PhylomeDB" id="Q19877"/>
<dbReference type="Reactome" id="R-CEL-156827">
    <property type="pathway name" value="L13a-mediated translational silencing of Ceruloplasmin expression"/>
</dbReference>
<dbReference type="Reactome" id="R-CEL-1799339">
    <property type="pathway name" value="SRP-dependent cotranslational protein targeting to membrane"/>
</dbReference>
<dbReference type="Reactome" id="R-CEL-72649">
    <property type="pathway name" value="Translation initiation complex formation"/>
</dbReference>
<dbReference type="Reactome" id="R-CEL-72689">
    <property type="pathway name" value="Formation of a pool of free 40S subunits"/>
</dbReference>
<dbReference type="Reactome" id="R-CEL-72695">
    <property type="pathway name" value="Formation of the ternary complex, and subsequently, the 43S complex"/>
</dbReference>
<dbReference type="Reactome" id="R-CEL-72702">
    <property type="pathway name" value="Ribosomal scanning and start codon recognition"/>
</dbReference>
<dbReference type="Reactome" id="R-CEL-72706">
    <property type="pathway name" value="GTP hydrolysis and joining of the 60S ribosomal subunit"/>
</dbReference>
<dbReference type="Reactome" id="R-CEL-9629569">
    <property type="pathway name" value="Protein hydroxylation"/>
</dbReference>
<dbReference type="Reactome" id="R-CEL-975956">
    <property type="pathway name" value="Nonsense Mediated Decay (NMD) independent of the Exon Junction Complex (EJC)"/>
</dbReference>
<dbReference type="Reactome" id="R-CEL-975957">
    <property type="pathway name" value="Nonsense Mediated Decay (NMD) enhanced by the Exon Junction Complex (EJC)"/>
</dbReference>
<dbReference type="PRO" id="PR:Q19877"/>
<dbReference type="Proteomes" id="UP000001940">
    <property type="component" value="Chromosome IV"/>
</dbReference>
<dbReference type="Bgee" id="WBGene00004492">
    <property type="expression patterns" value="Expressed in adult organism and 4 other cell types or tissues"/>
</dbReference>
<dbReference type="GO" id="GO:0022627">
    <property type="term" value="C:cytosolic small ribosomal subunit"/>
    <property type="evidence" value="ECO:0000250"/>
    <property type="project" value="UniProtKB"/>
</dbReference>
<dbReference type="GO" id="GO:0005840">
    <property type="term" value="C:ribosome"/>
    <property type="evidence" value="ECO:0000318"/>
    <property type="project" value="GO_Central"/>
</dbReference>
<dbReference type="GO" id="GO:0005791">
    <property type="term" value="C:rough endoplasmic reticulum"/>
    <property type="evidence" value="ECO:0007669"/>
    <property type="project" value="UniProtKB-SubCell"/>
</dbReference>
<dbReference type="GO" id="GO:0003735">
    <property type="term" value="F:structural constituent of ribosome"/>
    <property type="evidence" value="ECO:0000318"/>
    <property type="project" value="GO_Central"/>
</dbReference>
<dbReference type="GO" id="GO:0002181">
    <property type="term" value="P:cytoplasmic translation"/>
    <property type="evidence" value="ECO:0000250"/>
    <property type="project" value="UniProtKB"/>
</dbReference>
<dbReference type="GO" id="GO:0006412">
    <property type="term" value="P:translation"/>
    <property type="evidence" value="ECO:0000318"/>
    <property type="project" value="GO_Central"/>
</dbReference>
<dbReference type="CDD" id="cd03367">
    <property type="entry name" value="Ribosomal_S23"/>
    <property type="match status" value="1"/>
</dbReference>
<dbReference type="FunFam" id="2.40.50.140:FF:000007">
    <property type="entry name" value="40S ribosomal protein S23"/>
    <property type="match status" value="1"/>
</dbReference>
<dbReference type="Gene3D" id="2.40.50.140">
    <property type="entry name" value="Nucleic acid-binding proteins"/>
    <property type="match status" value="1"/>
</dbReference>
<dbReference type="InterPro" id="IPR012340">
    <property type="entry name" value="NA-bd_OB-fold"/>
</dbReference>
<dbReference type="InterPro" id="IPR006032">
    <property type="entry name" value="Ribosomal_uS12"/>
</dbReference>
<dbReference type="InterPro" id="IPR005680">
    <property type="entry name" value="Ribosomal_uS12_euk/arc"/>
</dbReference>
<dbReference type="NCBIfam" id="NF003254">
    <property type="entry name" value="PRK04211.1"/>
    <property type="match status" value="1"/>
</dbReference>
<dbReference type="NCBIfam" id="TIGR00982">
    <property type="entry name" value="uS12_E_A"/>
    <property type="match status" value="1"/>
</dbReference>
<dbReference type="PANTHER" id="PTHR11652">
    <property type="entry name" value="30S RIBOSOMAL PROTEIN S12 FAMILY MEMBER"/>
    <property type="match status" value="1"/>
</dbReference>
<dbReference type="Pfam" id="PF00164">
    <property type="entry name" value="Ribosom_S12_S23"/>
    <property type="match status" value="1"/>
</dbReference>
<dbReference type="PIRSF" id="PIRSF002133">
    <property type="entry name" value="Ribosomal_S12/S23"/>
    <property type="match status" value="1"/>
</dbReference>
<dbReference type="SUPFAM" id="SSF50249">
    <property type="entry name" value="Nucleic acid-binding proteins"/>
    <property type="match status" value="1"/>
</dbReference>
<dbReference type="PROSITE" id="PS00055">
    <property type="entry name" value="RIBOSOMAL_S12"/>
    <property type="match status" value="1"/>
</dbReference>